<proteinExistence type="inferred from homology"/>
<evidence type="ECO:0000255" key="1">
    <source>
        <dbReference type="HAMAP-Rule" id="MF_00123"/>
    </source>
</evidence>
<gene>
    <name evidence="1" type="primary">argS</name>
    <name type="ordered locus">BSUIS_A0915</name>
</gene>
<reference key="1">
    <citation type="submission" date="2007-12" db="EMBL/GenBank/DDBJ databases">
        <title>Brucella suis ATCC 23445 whole genome shotgun sequencing project.</title>
        <authorList>
            <person name="Setubal J.C."/>
            <person name="Bowns C."/>
            <person name="Boyle S."/>
            <person name="Crasta O.R."/>
            <person name="Czar M.J."/>
            <person name="Dharmanolla C."/>
            <person name="Gillespie J.J."/>
            <person name="Kenyon R.W."/>
            <person name="Lu J."/>
            <person name="Mane S."/>
            <person name="Mohapatra S."/>
            <person name="Nagrani S."/>
            <person name="Purkayastha A."/>
            <person name="Rajasimha H.K."/>
            <person name="Shallom J.M."/>
            <person name="Shallom S."/>
            <person name="Shukla M."/>
            <person name="Snyder E.E."/>
            <person name="Sobral B.W."/>
            <person name="Wattam A.R."/>
            <person name="Will R."/>
            <person name="Williams K."/>
            <person name="Yoo H."/>
            <person name="Bruce D."/>
            <person name="Detter C."/>
            <person name="Munk C."/>
            <person name="Brettin T.S."/>
        </authorList>
    </citation>
    <scope>NUCLEOTIDE SEQUENCE [LARGE SCALE GENOMIC DNA]</scope>
    <source>
        <strain>ATCC 23445 / NCTC 10510</strain>
    </source>
</reference>
<dbReference type="EC" id="6.1.1.19" evidence="1"/>
<dbReference type="EMBL" id="CP000911">
    <property type="protein sequence ID" value="ABY37982.1"/>
    <property type="molecule type" value="Genomic_DNA"/>
</dbReference>
<dbReference type="RefSeq" id="WP_006072604.1">
    <property type="nucleotide sequence ID" value="NC_010169.1"/>
</dbReference>
<dbReference type="SMR" id="B0CLK2"/>
<dbReference type="KEGG" id="bmt:BSUIS_A0915"/>
<dbReference type="HOGENOM" id="CLU_006406_0_1_5"/>
<dbReference type="Proteomes" id="UP000008545">
    <property type="component" value="Chromosome I"/>
</dbReference>
<dbReference type="GO" id="GO:0005737">
    <property type="term" value="C:cytoplasm"/>
    <property type="evidence" value="ECO:0007669"/>
    <property type="project" value="UniProtKB-SubCell"/>
</dbReference>
<dbReference type="GO" id="GO:0004814">
    <property type="term" value="F:arginine-tRNA ligase activity"/>
    <property type="evidence" value="ECO:0007669"/>
    <property type="project" value="UniProtKB-UniRule"/>
</dbReference>
<dbReference type="GO" id="GO:0005524">
    <property type="term" value="F:ATP binding"/>
    <property type="evidence" value="ECO:0007669"/>
    <property type="project" value="UniProtKB-UniRule"/>
</dbReference>
<dbReference type="GO" id="GO:0006420">
    <property type="term" value="P:arginyl-tRNA aminoacylation"/>
    <property type="evidence" value="ECO:0007669"/>
    <property type="project" value="UniProtKB-UniRule"/>
</dbReference>
<dbReference type="CDD" id="cd00671">
    <property type="entry name" value="ArgRS_core"/>
    <property type="match status" value="1"/>
</dbReference>
<dbReference type="Gene3D" id="3.30.1360.70">
    <property type="entry name" value="Arginyl tRNA synthetase N-terminal domain"/>
    <property type="match status" value="1"/>
</dbReference>
<dbReference type="Gene3D" id="3.40.50.620">
    <property type="entry name" value="HUPs"/>
    <property type="match status" value="1"/>
</dbReference>
<dbReference type="Gene3D" id="1.10.730.10">
    <property type="entry name" value="Isoleucyl-tRNA Synthetase, Domain 1"/>
    <property type="match status" value="1"/>
</dbReference>
<dbReference type="HAMAP" id="MF_00123">
    <property type="entry name" value="Arg_tRNA_synth"/>
    <property type="match status" value="1"/>
</dbReference>
<dbReference type="InterPro" id="IPR001412">
    <property type="entry name" value="aa-tRNA-synth_I_CS"/>
</dbReference>
<dbReference type="InterPro" id="IPR001278">
    <property type="entry name" value="Arg-tRNA-ligase"/>
</dbReference>
<dbReference type="InterPro" id="IPR005148">
    <property type="entry name" value="Arg-tRNA-synth_N"/>
</dbReference>
<dbReference type="InterPro" id="IPR036695">
    <property type="entry name" value="Arg-tRNA-synth_N_sf"/>
</dbReference>
<dbReference type="InterPro" id="IPR035684">
    <property type="entry name" value="ArgRS_core"/>
</dbReference>
<dbReference type="InterPro" id="IPR008909">
    <property type="entry name" value="DALR_anticod-bd"/>
</dbReference>
<dbReference type="InterPro" id="IPR014729">
    <property type="entry name" value="Rossmann-like_a/b/a_fold"/>
</dbReference>
<dbReference type="InterPro" id="IPR009080">
    <property type="entry name" value="tRNAsynth_Ia_anticodon-bd"/>
</dbReference>
<dbReference type="NCBIfam" id="TIGR00456">
    <property type="entry name" value="argS"/>
    <property type="match status" value="1"/>
</dbReference>
<dbReference type="PANTHER" id="PTHR11956:SF5">
    <property type="entry name" value="ARGININE--TRNA LIGASE, CYTOPLASMIC"/>
    <property type="match status" value="1"/>
</dbReference>
<dbReference type="PANTHER" id="PTHR11956">
    <property type="entry name" value="ARGINYL-TRNA SYNTHETASE"/>
    <property type="match status" value="1"/>
</dbReference>
<dbReference type="Pfam" id="PF03485">
    <property type="entry name" value="Arg_tRNA_synt_N"/>
    <property type="match status" value="1"/>
</dbReference>
<dbReference type="Pfam" id="PF05746">
    <property type="entry name" value="DALR_1"/>
    <property type="match status" value="1"/>
</dbReference>
<dbReference type="Pfam" id="PF00750">
    <property type="entry name" value="tRNA-synt_1d"/>
    <property type="match status" value="1"/>
</dbReference>
<dbReference type="PRINTS" id="PR01038">
    <property type="entry name" value="TRNASYNTHARG"/>
</dbReference>
<dbReference type="SMART" id="SM01016">
    <property type="entry name" value="Arg_tRNA_synt_N"/>
    <property type="match status" value="1"/>
</dbReference>
<dbReference type="SMART" id="SM00836">
    <property type="entry name" value="DALR_1"/>
    <property type="match status" value="1"/>
</dbReference>
<dbReference type="SUPFAM" id="SSF47323">
    <property type="entry name" value="Anticodon-binding domain of a subclass of class I aminoacyl-tRNA synthetases"/>
    <property type="match status" value="1"/>
</dbReference>
<dbReference type="SUPFAM" id="SSF55190">
    <property type="entry name" value="Arginyl-tRNA synthetase (ArgRS), N-terminal 'additional' domain"/>
    <property type="match status" value="1"/>
</dbReference>
<dbReference type="SUPFAM" id="SSF52374">
    <property type="entry name" value="Nucleotidylyl transferase"/>
    <property type="match status" value="1"/>
</dbReference>
<dbReference type="PROSITE" id="PS00178">
    <property type="entry name" value="AA_TRNA_LIGASE_I"/>
    <property type="match status" value="1"/>
</dbReference>
<feature type="chain" id="PRO_1000076206" description="Arginine--tRNA ligase">
    <location>
        <begin position="1"/>
        <end position="585"/>
    </location>
</feature>
<feature type="short sequence motif" description="'HIGH' region">
    <location>
        <begin position="131"/>
        <end position="141"/>
    </location>
</feature>
<sequence>MNIFADFDARIKKTLQDIDLKQKDGGELDLSRIGVEPPRDASHGDIATNAAMLLSKAVGQNPRELAARIAEALKADEDVESVDVAGPGFINLRLKASYWQRELLVMLNEGTDFGRSRLGAGKKVNVEYVSANPTGPMHVGHCRGAVVGDVLANLLKFAGYDVVKEYYINDAGAQIDVLARSVMLRYREALGESIGEIPAGLYPGDYLVRVGQELAGEFGTKLLEMPEAEALAIVKDRTIDAMMAMIRADLDALNVHHDVFYSERKLHVDHARAIRNAINDLTLKGHVYKGKLPPPKGQLPEDWEDREQTLFRSTEVGDDIDRPLMKSDGSFTYFAGDVAYFKDKYDRGFNEMIYVLGADHGGYVKRLEAVARAVSDGKAKLTVLLCQLVKLFRNGEPVRMSKRAGEFITLRDVVDEVGRDPVRFMMLYRKNDAPLDFDFAKVTEQSKDNPVFYVQYASARCHSVFRQAADQLGLVDLDRVAMGSHFEKLTDESEIALVRKLAEYPRLIESAAIHQEPHRLAFYLYDLASSFHSQWNRGTENPDLRFIKVNDPDLSLARLGLVQVVSDVLTSGLTIIGADAPTEMH</sequence>
<organism>
    <name type="scientific">Brucella suis (strain ATCC 23445 / NCTC 10510)</name>
    <dbReference type="NCBI Taxonomy" id="470137"/>
    <lineage>
        <taxon>Bacteria</taxon>
        <taxon>Pseudomonadati</taxon>
        <taxon>Pseudomonadota</taxon>
        <taxon>Alphaproteobacteria</taxon>
        <taxon>Hyphomicrobiales</taxon>
        <taxon>Brucellaceae</taxon>
        <taxon>Brucella/Ochrobactrum group</taxon>
        <taxon>Brucella</taxon>
    </lineage>
</organism>
<accession>B0CLK2</accession>
<keyword id="KW-0030">Aminoacyl-tRNA synthetase</keyword>
<keyword id="KW-0067">ATP-binding</keyword>
<keyword id="KW-0963">Cytoplasm</keyword>
<keyword id="KW-0436">Ligase</keyword>
<keyword id="KW-0547">Nucleotide-binding</keyword>
<keyword id="KW-0648">Protein biosynthesis</keyword>
<comment type="catalytic activity">
    <reaction evidence="1">
        <text>tRNA(Arg) + L-arginine + ATP = L-arginyl-tRNA(Arg) + AMP + diphosphate</text>
        <dbReference type="Rhea" id="RHEA:20301"/>
        <dbReference type="Rhea" id="RHEA-COMP:9658"/>
        <dbReference type="Rhea" id="RHEA-COMP:9673"/>
        <dbReference type="ChEBI" id="CHEBI:30616"/>
        <dbReference type="ChEBI" id="CHEBI:32682"/>
        <dbReference type="ChEBI" id="CHEBI:33019"/>
        <dbReference type="ChEBI" id="CHEBI:78442"/>
        <dbReference type="ChEBI" id="CHEBI:78513"/>
        <dbReference type="ChEBI" id="CHEBI:456215"/>
        <dbReference type="EC" id="6.1.1.19"/>
    </reaction>
</comment>
<comment type="subunit">
    <text evidence="1">Monomer.</text>
</comment>
<comment type="subcellular location">
    <subcellularLocation>
        <location evidence="1">Cytoplasm</location>
    </subcellularLocation>
</comment>
<comment type="similarity">
    <text evidence="1">Belongs to the class-I aminoacyl-tRNA synthetase family.</text>
</comment>
<name>SYR_BRUSI</name>
<protein>
    <recommendedName>
        <fullName evidence="1">Arginine--tRNA ligase</fullName>
        <ecNumber evidence="1">6.1.1.19</ecNumber>
    </recommendedName>
    <alternativeName>
        <fullName evidence="1">Arginyl-tRNA synthetase</fullName>
        <shortName evidence="1">ArgRS</shortName>
    </alternativeName>
</protein>